<proteinExistence type="inferred from homology"/>
<organism>
    <name type="scientific">Mesorhizobium japonicum (strain LMG 29417 / CECT 9101 / MAFF 303099)</name>
    <name type="common">Mesorhizobium loti (strain MAFF 303099)</name>
    <dbReference type="NCBI Taxonomy" id="266835"/>
    <lineage>
        <taxon>Bacteria</taxon>
        <taxon>Pseudomonadati</taxon>
        <taxon>Pseudomonadota</taxon>
        <taxon>Alphaproteobacteria</taxon>
        <taxon>Hyphomicrobiales</taxon>
        <taxon>Phyllobacteriaceae</taxon>
        <taxon>Mesorhizobium</taxon>
    </lineage>
</organism>
<reference key="1">
    <citation type="journal article" date="2000" name="DNA Res.">
        <title>Complete genome structure of the nitrogen-fixing symbiotic bacterium Mesorhizobium loti.</title>
        <authorList>
            <person name="Kaneko T."/>
            <person name="Nakamura Y."/>
            <person name="Sato S."/>
            <person name="Asamizu E."/>
            <person name="Kato T."/>
            <person name="Sasamoto S."/>
            <person name="Watanabe A."/>
            <person name="Idesawa K."/>
            <person name="Ishikawa A."/>
            <person name="Kawashima K."/>
            <person name="Kimura T."/>
            <person name="Kishida Y."/>
            <person name="Kiyokawa C."/>
            <person name="Kohara M."/>
            <person name="Matsumoto M."/>
            <person name="Matsuno A."/>
            <person name="Mochizuki Y."/>
            <person name="Nakayama S."/>
            <person name="Nakazaki N."/>
            <person name="Shimpo S."/>
            <person name="Sugimoto M."/>
            <person name="Takeuchi C."/>
            <person name="Yamada M."/>
            <person name="Tabata S."/>
        </authorList>
    </citation>
    <scope>NUCLEOTIDE SEQUENCE [LARGE SCALE GENOMIC DNA]</scope>
    <source>
        <strain>LMG 29417 / CECT 9101 / MAFF 303099</strain>
    </source>
</reference>
<comment type="function">
    <text evidence="1">This protein binds to the 23S rRNA, and is important in its secondary structure. It is located near the subunit interface in the base of the L7/L12 stalk, and near the tRNA binding site of the peptidyltransferase center.</text>
</comment>
<comment type="subunit">
    <text evidence="1">Part of the 50S ribosomal subunit.</text>
</comment>
<comment type="similarity">
    <text evidence="1">Belongs to the universal ribosomal protein uL6 family.</text>
</comment>
<sequence>MSRIGKKPVSLPQGVTATVNGQTVTAKGPKGELKFVVNDEVLVKMEGSEIAVQPRDQTKTARSKWGMSRTQIVNILHGVKDGFEKKLEITGVGYRAAMQGKNLQLALGFSHDVVYETPAGVTIAVPKPTEITVTGIDKQQVGQVAAEIREYRGPEPYKGKGVRYAGEKIVRKEGKKK</sequence>
<protein>
    <recommendedName>
        <fullName evidence="1">Large ribosomal subunit protein uL6</fullName>
    </recommendedName>
    <alternativeName>
        <fullName evidence="2">50S ribosomal protein L6</fullName>
    </alternativeName>
</protein>
<gene>
    <name evidence="1" type="primary">rplF</name>
    <name type="ordered locus">mlr0312</name>
</gene>
<dbReference type="EMBL" id="BA000012">
    <property type="protein sequence ID" value="BAB47921.1"/>
    <property type="molecule type" value="Genomic_DNA"/>
</dbReference>
<dbReference type="RefSeq" id="WP_010909283.1">
    <property type="nucleotide sequence ID" value="NC_002678.2"/>
</dbReference>
<dbReference type="SMR" id="Q98N42"/>
<dbReference type="GeneID" id="66684201"/>
<dbReference type="KEGG" id="mlo:mlr0312"/>
<dbReference type="eggNOG" id="COG0097">
    <property type="taxonomic scope" value="Bacteria"/>
</dbReference>
<dbReference type="HOGENOM" id="CLU_065464_1_2_5"/>
<dbReference type="Proteomes" id="UP000000552">
    <property type="component" value="Chromosome"/>
</dbReference>
<dbReference type="GO" id="GO:0022625">
    <property type="term" value="C:cytosolic large ribosomal subunit"/>
    <property type="evidence" value="ECO:0007669"/>
    <property type="project" value="TreeGrafter"/>
</dbReference>
<dbReference type="GO" id="GO:0019843">
    <property type="term" value="F:rRNA binding"/>
    <property type="evidence" value="ECO:0007669"/>
    <property type="project" value="UniProtKB-UniRule"/>
</dbReference>
<dbReference type="GO" id="GO:0003735">
    <property type="term" value="F:structural constituent of ribosome"/>
    <property type="evidence" value="ECO:0007669"/>
    <property type="project" value="InterPro"/>
</dbReference>
<dbReference type="GO" id="GO:0002181">
    <property type="term" value="P:cytoplasmic translation"/>
    <property type="evidence" value="ECO:0007669"/>
    <property type="project" value="TreeGrafter"/>
</dbReference>
<dbReference type="FunFam" id="3.90.930.12:FF:000001">
    <property type="entry name" value="50S ribosomal protein L6"/>
    <property type="match status" value="1"/>
</dbReference>
<dbReference type="Gene3D" id="3.90.930.12">
    <property type="entry name" value="Ribosomal protein L6, alpha-beta domain"/>
    <property type="match status" value="2"/>
</dbReference>
<dbReference type="HAMAP" id="MF_01365_B">
    <property type="entry name" value="Ribosomal_uL6_B"/>
    <property type="match status" value="1"/>
</dbReference>
<dbReference type="InterPro" id="IPR000702">
    <property type="entry name" value="Ribosomal_uL6-like"/>
</dbReference>
<dbReference type="InterPro" id="IPR036789">
    <property type="entry name" value="Ribosomal_uL6-like_a/b-dom_sf"/>
</dbReference>
<dbReference type="InterPro" id="IPR020040">
    <property type="entry name" value="Ribosomal_uL6_a/b-dom"/>
</dbReference>
<dbReference type="InterPro" id="IPR019906">
    <property type="entry name" value="Ribosomal_uL6_bac-type"/>
</dbReference>
<dbReference type="InterPro" id="IPR002358">
    <property type="entry name" value="Ribosomal_uL6_CS"/>
</dbReference>
<dbReference type="NCBIfam" id="TIGR03654">
    <property type="entry name" value="L6_bact"/>
    <property type="match status" value="1"/>
</dbReference>
<dbReference type="PANTHER" id="PTHR11655">
    <property type="entry name" value="60S/50S RIBOSOMAL PROTEIN L6/L9"/>
    <property type="match status" value="1"/>
</dbReference>
<dbReference type="PANTHER" id="PTHR11655:SF14">
    <property type="entry name" value="LARGE RIBOSOMAL SUBUNIT PROTEIN UL6M"/>
    <property type="match status" value="1"/>
</dbReference>
<dbReference type="Pfam" id="PF00347">
    <property type="entry name" value="Ribosomal_L6"/>
    <property type="match status" value="2"/>
</dbReference>
<dbReference type="PIRSF" id="PIRSF002162">
    <property type="entry name" value="Ribosomal_L6"/>
    <property type="match status" value="1"/>
</dbReference>
<dbReference type="PRINTS" id="PR00059">
    <property type="entry name" value="RIBOSOMALL6"/>
</dbReference>
<dbReference type="SUPFAM" id="SSF56053">
    <property type="entry name" value="Ribosomal protein L6"/>
    <property type="match status" value="2"/>
</dbReference>
<dbReference type="PROSITE" id="PS00525">
    <property type="entry name" value="RIBOSOMAL_L6_1"/>
    <property type="match status" value="1"/>
</dbReference>
<evidence type="ECO:0000255" key="1">
    <source>
        <dbReference type="HAMAP-Rule" id="MF_01365"/>
    </source>
</evidence>
<evidence type="ECO:0000305" key="2"/>
<keyword id="KW-0687">Ribonucleoprotein</keyword>
<keyword id="KW-0689">Ribosomal protein</keyword>
<keyword id="KW-0694">RNA-binding</keyword>
<keyword id="KW-0699">rRNA-binding</keyword>
<accession>Q98N42</accession>
<name>RL6_RHILO</name>
<feature type="chain" id="PRO_0000260925" description="Large ribosomal subunit protein uL6">
    <location>
        <begin position="1"/>
        <end position="177"/>
    </location>
</feature>